<evidence type="ECO:0000250" key="1">
    <source>
        <dbReference type="UniProtKB" id="P00442"/>
    </source>
</evidence>
<evidence type="ECO:0000250" key="2">
    <source>
        <dbReference type="UniProtKB" id="P00445"/>
    </source>
</evidence>
<evidence type="ECO:0000250" key="3">
    <source>
        <dbReference type="UniProtKB" id="P85978"/>
    </source>
</evidence>
<evidence type="ECO:0000256" key="4">
    <source>
        <dbReference type="SAM" id="MobiDB-lite"/>
    </source>
</evidence>
<evidence type="ECO:0000305" key="5"/>
<name>SODC_CORTN</name>
<keyword id="KW-0049">Antioxidant</keyword>
<keyword id="KW-0186">Copper</keyword>
<keyword id="KW-0963">Cytoplasm</keyword>
<keyword id="KW-1015">Disulfide bond</keyword>
<keyword id="KW-0479">Metal-binding</keyword>
<keyword id="KW-0560">Oxidoreductase</keyword>
<keyword id="KW-0862">Zinc</keyword>
<proteinExistence type="inferred from homology"/>
<gene>
    <name type="primary">SOD1</name>
</gene>
<feature type="initiator methionine" description="Removed" evidence="2">
    <location>
        <position position="1"/>
    </location>
</feature>
<feature type="chain" id="PRO_0000164125" description="Superoxide dismutase [Cu-Zn]">
    <location>
        <begin position="2"/>
        <end position="154"/>
    </location>
</feature>
<feature type="region of interest" description="Disordered" evidence="4">
    <location>
        <begin position="125"/>
        <end position="144"/>
    </location>
</feature>
<feature type="compositionally biased region" description="Basic and acidic residues" evidence="4">
    <location>
        <begin position="125"/>
        <end position="136"/>
    </location>
</feature>
<feature type="binding site" evidence="2">
    <location>
        <position position="47"/>
    </location>
    <ligand>
        <name>Cu cation</name>
        <dbReference type="ChEBI" id="CHEBI:23378"/>
        <note>catalytic</note>
    </ligand>
</feature>
<feature type="binding site" evidence="2">
    <location>
        <position position="49"/>
    </location>
    <ligand>
        <name>Cu cation</name>
        <dbReference type="ChEBI" id="CHEBI:23378"/>
        <note>catalytic</note>
    </ligand>
</feature>
<feature type="binding site" evidence="2">
    <location>
        <position position="64"/>
    </location>
    <ligand>
        <name>Cu cation</name>
        <dbReference type="ChEBI" id="CHEBI:23378"/>
        <note>catalytic</note>
    </ligand>
</feature>
<feature type="binding site" evidence="2">
    <location>
        <position position="64"/>
    </location>
    <ligand>
        <name>Zn(2+)</name>
        <dbReference type="ChEBI" id="CHEBI:29105"/>
        <note>structural</note>
    </ligand>
</feature>
<feature type="binding site" evidence="2">
    <location>
        <position position="72"/>
    </location>
    <ligand>
        <name>Zn(2+)</name>
        <dbReference type="ChEBI" id="CHEBI:29105"/>
        <note>structural</note>
    </ligand>
</feature>
<feature type="binding site" evidence="2">
    <location>
        <position position="81"/>
    </location>
    <ligand>
        <name>Zn(2+)</name>
        <dbReference type="ChEBI" id="CHEBI:29105"/>
        <note>structural</note>
    </ligand>
</feature>
<feature type="binding site" evidence="2">
    <location>
        <position position="84"/>
    </location>
    <ligand>
        <name>Zn(2+)</name>
        <dbReference type="ChEBI" id="CHEBI:29105"/>
        <note>structural</note>
    </ligand>
</feature>
<feature type="binding site" evidence="2">
    <location>
        <position position="121"/>
    </location>
    <ligand>
        <name>Cu cation</name>
        <dbReference type="ChEBI" id="CHEBI:23378"/>
        <note>catalytic</note>
    </ligand>
</feature>
<feature type="binding site" evidence="2">
    <location>
        <position position="144"/>
    </location>
    <ligand>
        <name>substrate</name>
    </ligand>
</feature>
<feature type="disulfide bond" evidence="2">
    <location>
        <begin position="58"/>
        <end position="147"/>
    </location>
</feature>
<reference key="1">
    <citation type="submission" date="2003-10" db="EMBL/GenBank/DDBJ databases">
        <title>Comparison of gene structure of the Cu,Zn superoxide dismutase (SOD1) from Cordyceps militaris, Paecillomyces tenuipes and P. sinensis.</title>
        <authorList>
            <person name="Park N.S."/>
            <person name="Lee S.M."/>
            <person name="Jin B.R."/>
            <person name="Sohn H.D."/>
        </authorList>
    </citation>
    <scope>NUCLEOTIDE SEQUENCE [GENOMIC DNA]</scope>
</reference>
<sequence>MVKAVCVLRGDAKVGGTVTFEQESESAPTTITYDLTGNDPNAERGFHIHTFGDNTNGCTSAGPHFNPHGKTHGAPTDAARHVGDLGNVKTDAQGNAKGSIQDSQVKLIGPHSVIGRTVVVHAGTDDLGKGGNEESLKTGNAGPRPACGVIGVAN</sequence>
<dbReference type="EC" id="1.15.1.1" evidence="3"/>
<dbReference type="EMBL" id="AY176060">
    <property type="protein sequence ID" value="AAN75576.1"/>
    <property type="molecule type" value="Genomic_DNA"/>
</dbReference>
<dbReference type="SMR" id="Q8J0N3"/>
<dbReference type="GO" id="GO:0005737">
    <property type="term" value="C:cytoplasm"/>
    <property type="evidence" value="ECO:0007669"/>
    <property type="project" value="UniProtKB-SubCell"/>
</dbReference>
<dbReference type="GO" id="GO:0005507">
    <property type="term" value="F:copper ion binding"/>
    <property type="evidence" value="ECO:0007669"/>
    <property type="project" value="InterPro"/>
</dbReference>
<dbReference type="GO" id="GO:0004784">
    <property type="term" value="F:superoxide dismutase activity"/>
    <property type="evidence" value="ECO:0007669"/>
    <property type="project" value="UniProtKB-EC"/>
</dbReference>
<dbReference type="CDD" id="cd00305">
    <property type="entry name" value="Cu-Zn_Superoxide_Dismutase"/>
    <property type="match status" value="1"/>
</dbReference>
<dbReference type="FunFam" id="2.60.40.200:FF:000001">
    <property type="entry name" value="Superoxide dismutase [Cu-Zn]"/>
    <property type="match status" value="1"/>
</dbReference>
<dbReference type="Gene3D" id="2.60.40.200">
    <property type="entry name" value="Superoxide dismutase, copper/zinc binding domain"/>
    <property type="match status" value="1"/>
</dbReference>
<dbReference type="InterPro" id="IPR036423">
    <property type="entry name" value="SOD-like_Cu/Zn_dom_sf"/>
</dbReference>
<dbReference type="InterPro" id="IPR024134">
    <property type="entry name" value="SOD_Cu/Zn_/chaperone"/>
</dbReference>
<dbReference type="InterPro" id="IPR018152">
    <property type="entry name" value="SOD_Cu/Zn_BS"/>
</dbReference>
<dbReference type="InterPro" id="IPR001424">
    <property type="entry name" value="SOD_Cu_Zn_dom"/>
</dbReference>
<dbReference type="PANTHER" id="PTHR10003">
    <property type="entry name" value="SUPEROXIDE DISMUTASE CU-ZN -RELATED"/>
    <property type="match status" value="1"/>
</dbReference>
<dbReference type="Pfam" id="PF00080">
    <property type="entry name" value="Sod_Cu"/>
    <property type="match status" value="1"/>
</dbReference>
<dbReference type="PRINTS" id="PR00068">
    <property type="entry name" value="CUZNDISMTASE"/>
</dbReference>
<dbReference type="SUPFAM" id="SSF49329">
    <property type="entry name" value="Cu,Zn superoxide dismutase-like"/>
    <property type="match status" value="1"/>
</dbReference>
<dbReference type="PROSITE" id="PS00087">
    <property type="entry name" value="SOD_CU_ZN_1"/>
    <property type="match status" value="1"/>
</dbReference>
<dbReference type="PROSITE" id="PS00332">
    <property type="entry name" value="SOD_CU_ZN_2"/>
    <property type="match status" value="1"/>
</dbReference>
<protein>
    <recommendedName>
        <fullName>Superoxide dismutase [Cu-Zn]</fullName>
        <ecNumber evidence="3">1.15.1.1</ecNumber>
    </recommendedName>
</protein>
<accession>Q8J0N3</accession>
<comment type="function">
    <text evidence="1">Destroys radicals which are normally produced within the cells and which are toxic to biological systems.</text>
</comment>
<comment type="catalytic activity">
    <reaction evidence="3">
        <text>2 superoxide + 2 H(+) = H2O2 + O2</text>
        <dbReference type="Rhea" id="RHEA:20696"/>
        <dbReference type="ChEBI" id="CHEBI:15378"/>
        <dbReference type="ChEBI" id="CHEBI:15379"/>
        <dbReference type="ChEBI" id="CHEBI:16240"/>
        <dbReference type="ChEBI" id="CHEBI:18421"/>
        <dbReference type="EC" id="1.15.1.1"/>
    </reaction>
</comment>
<comment type="cofactor">
    <cofactor evidence="2">
        <name>Cu cation</name>
        <dbReference type="ChEBI" id="CHEBI:23378"/>
    </cofactor>
    <text evidence="2">Binds 1 copper ion per subunit.</text>
</comment>
<comment type="cofactor">
    <cofactor evidence="2">
        <name>Zn(2+)</name>
        <dbReference type="ChEBI" id="CHEBI:29105"/>
    </cofactor>
    <text evidence="2">Binds 1 zinc ion per subunit.</text>
</comment>
<comment type="subunit">
    <text evidence="3">Homodimer.</text>
</comment>
<comment type="subcellular location">
    <subcellularLocation>
        <location evidence="2">Cytoplasm</location>
    </subcellularLocation>
</comment>
<comment type="similarity">
    <text evidence="5">Belongs to the Cu-Zn superoxide dismutase family.</text>
</comment>
<organism>
    <name type="scientific">Cordyceps tenuipes</name>
    <name type="common">Entomopathogenic fungus</name>
    <name type="synonym">Isaria tenuipes</name>
    <dbReference type="NCBI Taxonomy" id="45847"/>
    <lineage>
        <taxon>Eukaryota</taxon>
        <taxon>Fungi</taxon>
        <taxon>Dikarya</taxon>
        <taxon>Ascomycota</taxon>
        <taxon>Pezizomycotina</taxon>
        <taxon>Sordariomycetes</taxon>
        <taxon>Hypocreomycetidae</taxon>
        <taxon>Hypocreales</taxon>
        <taxon>Cordycipitaceae</taxon>
        <taxon>Cordyceps</taxon>
    </lineage>
</organism>